<comment type="function">
    <text evidence="1">Cell wall formation.</text>
</comment>
<comment type="catalytic activity">
    <reaction evidence="1">
        <text>UDP-N-acetyl-alpha-D-muramate + NADP(+) = UDP-N-acetyl-3-O-(1-carboxyvinyl)-alpha-D-glucosamine + NADPH + H(+)</text>
        <dbReference type="Rhea" id="RHEA:12248"/>
        <dbReference type="ChEBI" id="CHEBI:15378"/>
        <dbReference type="ChEBI" id="CHEBI:57783"/>
        <dbReference type="ChEBI" id="CHEBI:58349"/>
        <dbReference type="ChEBI" id="CHEBI:68483"/>
        <dbReference type="ChEBI" id="CHEBI:70757"/>
        <dbReference type="EC" id="1.3.1.98"/>
    </reaction>
</comment>
<comment type="cofactor">
    <cofactor evidence="1">
        <name>FAD</name>
        <dbReference type="ChEBI" id="CHEBI:57692"/>
    </cofactor>
</comment>
<comment type="pathway">
    <text evidence="1">Cell wall biogenesis; peptidoglycan biosynthesis.</text>
</comment>
<comment type="subcellular location">
    <subcellularLocation>
        <location evidence="1">Cytoplasm</location>
    </subcellularLocation>
</comment>
<comment type="similarity">
    <text evidence="1">Belongs to the MurB family.</text>
</comment>
<sequence length="306" mass="33381">MNKNDILRGLESILPKDIIKVDEPLKRYTYTETGGEADFYLSPTKNEEVQAIVKFAHENSIPVTYLGNGSNIIIREGGIRGIVLSLLSLNHIETSDDAIIAGSGAAIIDVSNVARDHVLTGLEFACGIPGSIGGAVFMNAGAYGGEVKDCIDYALCVNEKGDLLKLTTAELELDYRNSVVQQKHLVVLEAAFTLEPGKLDEIQAKMDDLTERRESKQPLEFPSCGSVFQRPPGHFAGKLIQDSNLQGYRIGGVEVSTKHAGFMVNVDNGTATDYEALIHHVQKIVKEKFDVELNTEVRIIGDHPTD</sequence>
<dbReference type="EC" id="1.3.1.98" evidence="1"/>
<dbReference type="EMBL" id="CP000029">
    <property type="protein sequence ID" value="AAW53803.1"/>
    <property type="molecule type" value="Genomic_DNA"/>
</dbReference>
<dbReference type="SMR" id="Q5HQZ1"/>
<dbReference type="STRING" id="176279.SERP0405"/>
<dbReference type="KEGG" id="ser:SERP0405"/>
<dbReference type="eggNOG" id="COG0812">
    <property type="taxonomic scope" value="Bacteria"/>
</dbReference>
<dbReference type="HOGENOM" id="CLU_035304_1_1_9"/>
<dbReference type="UniPathway" id="UPA00219"/>
<dbReference type="Proteomes" id="UP000000531">
    <property type="component" value="Chromosome"/>
</dbReference>
<dbReference type="GO" id="GO:0005829">
    <property type="term" value="C:cytosol"/>
    <property type="evidence" value="ECO:0007669"/>
    <property type="project" value="TreeGrafter"/>
</dbReference>
<dbReference type="GO" id="GO:0071949">
    <property type="term" value="F:FAD binding"/>
    <property type="evidence" value="ECO:0007669"/>
    <property type="project" value="InterPro"/>
</dbReference>
<dbReference type="GO" id="GO:0008762">
    <property type="term" value="F:UDP-N-acetylmuramate dehydrogenase activity"/>
    <property type="evidence" value="ECO:0007669"/>
    <property type="project" value="UniProtKB-UniRule"/>
</dbReference>
<dbReference type="GO" id="GO:0051301">
    <property type="term" value="P:cell division"/>
    <property type="evidence" value="ECO:0007669"/>
    <property type="project" value="UniProtKB-KW"/>
</dbReference>
<dbReference type="GO" id="GO:0071555">
    <property type="term" value="P:cell wall organization"/>
    <property type="evidence" value="ECO:0007669"/>
    <property type="project" value="UniProtKB-KW"/>
</dbReference>
<dbReference type="GO" id="GO:0009252">
    <property type="term" value="P:peptidoglycan biosynthetic process"/>
    <property type="evidence" value="ECO:0007669"/>
    <property type="project" value="UniProtKB-UniRule"/>
</dbReference>
<dbReference type="GO" id="GO:0008360">
    <property type="term" value="P:regulation of cell shape"/>
    <property type="evidence" value="ECO:0007669"/>
    <property type="project" value="UniProtKB-KW"/>
</dbReference>
<dbReference type="FunFam" id="3.90.78.10:FF:000001">
    <property type="entry name" value="UDP-N-acetylenolpyruvoylglucosamine reductase"/>
    <property type="match status" value="1"/>
</dbReference>
<dbReference type="Gene3D" id="3.30.465.10">
    <property type="match status" value="1"/>
</dbReference>
<dbReference type="Gene3D" id="3.90.78.10">
    <property type="entry name" value="UDP-N-acetylenolpyruvoylglucosamine reductase, C-terminal domain"/>
    <property type="match status" value="1"/>
</dbReference>
<dbReference type="Gene3D" id="3.30.43.10">
    <property type="entry name" value="Uridine Diphospho-n-acetylenolpyruvylglucosamine Reductase, domain 2"/>
    <property type="match status" value="1"/>
</dbReference>
<dbReference type="HAMAP" id="MF_00037">
    <property type="entry name" value="MurB"/>
    <property type="match status" value="1"/>
</dbReference>
<dbReference type="InterPro" id="IPR016166">
    <property type="entry name" value="FAD-bd_PCMH"/>
</dbReference>
<dbReference type="InterPro" id="IPR036318">
    <property type="entry name" value="FAD-bd_PCMH-like_sf"/>
</dbReference>
<dbReference type="InterPro" id="IPR016167">
    <property type="entry name" value="FAD-bd_PCMH_sub1"/>
</dbReference>
<dbReference type="InterPro" id="IPR016169">
    <property type="entry name" value="FAD-bd_PCMH_sub2"/>
</dbReference>
<dbReference type="InterPro" id="IPR003170">
    <property type="entry name" value="MurB"/>
</dbReference>
<dbReference type="InterPro" id="IPR011601">
    <property type="entry name" value="MurB_C"/>
</dbReference>
<dbReference type="InterPro" id="IPR036635">
    <property type="entry name" value="MurB_C_sf"/>
</dbReference>
<dbReference type="InterPro" id="IPR006094">
    <property type="entry name" value="Oxid_FAD_bind_N"/>
</dbReference>
<dbReference type="NCBIfam" id="TIGR00179">
    <property type="entry name" value="murB"/>
    <property type="match status" value="1"/>
</dbReference>
<dbReference type="NCBIfam" id="NF010480">
    <property type="entry name" value="PRK13905.1"/>
    <property type="match status" value="1"/>
</dbReference>
<dbReference type="PANTHER" id="PTHR21071">
    <property type="entry name" value="UDP-N-ACETYLENOLPYRUVOYLGLUCOSAMINE REDUCTASE"/>
    <property type="match status" value="1"/>
</dbReference>
<dbReference type="PANTHER" id="PTHR21071:SF4">
    <property type="entry name" value="UDP-N-ACETYLENOLPYRUVOYLGLUCOSAMINE REDUCTASE"/>
    <property type="match status" value="1"/>
</dbReference>
<dbReference type="Pfam" id="PF01565">
    <property type="entry name" value="FAD_binding_4"/>
    <property type="match status" value="1"/>
</dbReference>
<dbReference type="Pfam" id="PF02873">
    <property type="entry name" value="MurB_C"/>
    <property type="match status" value="1"/>
</dbReference>
<dbReference type="SUPFAM" id="SSF56176">
    <property type="entry name" value="FAD-binding/transporter-associated domain-like"/>
    <property type="match status" value="1"/>
</dbReference>
<dbReference type="SUPFAM" id="SSF56194">
    <property type="entry name" value="Uridine diphospho-N-Acetylenolpyruvylglucosamine reductase, MurB, C-terminal domain"/>
    <property type="match status" value="1"/>
</dbReference>
<dbReference type="PROSITE" id="PS51387">
    <property type="entry name" value="FAD_PCMH"/>
    <property type="match status" value="1"/>
</dbReference>
<proteinExistence type="inferred from homology"/>
<organism>
    <name type="scientific">Staphylococcus epidermidis (strain ATCC 35984 / DSM 28319 / BCRC 17069 / CCUG 31568 / BM 3577 / RP62A)</name>
    <dbReference type="NCBI Taxonomy" id="176279"/>
    <lineage>
        <taxon>Bacteria</taxon>
        <taxon>Bacillati</taxon>
        <taxon>Bacillota</taxon>
        <taxon>Bacilli</taxon>
        <taxon>Bacillales</taxon>
        <taxon>Staphylococcaceae</taxon>
        <taxon>Staphylococcus</taxon>
    </lineage>
</organism>
<reference key="1">
    <citation type="journal article" date="2005" name="J. Bacteriol.">
        <title>Insights on evolution of virulence and resistance from the complete genome analysis of an early methicillin-resistant Staphylococcus aureus strain and a biofilm-producing methicillin-resistant Staphylococcus epidermidis strain.</title>
        <authorList>
            <person name="Gill S.R."/>
            <person name="Fouts D.E."/>
            <person name="Archer G.L."/>
            <person name="Mongodin E.F."/>
            <person name="DeBoy R.T."/>
            <person name="Ravel J."/>
            <person name="Paulsen I.T."/>
            <person name="Kolonay J.F."/>
            <person name="Brinkac L.M."/>
            <person name="Beanan M.J."/>
            <person name="Dodson R.J."/>
            <person name="Daugherty S.C."/>
            <person name="Madupu R."/>
            <person name="Angiuoli S.V."/>
            <person name="Durkin A.S."/>
            <person name="Haft D.H."/>
            <person name="Vamathevan J.J."/>
            <person name="Khouri H."/>
            <person name="Utterback T.R."/>
            <person name="Lee C."/>
            <person name="Dimitrov G."/>
            <person name="Jiang L."/>
            <person name="Qin H."/>
            <person name="Weidman J."/>
            <person name="Tran K."/>
            <person name="Kang K.H."/>
            <person name="Hance I.R."/>
            <person name="Nelson K.E."/>
            <person name="Fraser C.M."/>
        </authorList>
    </citation>
    <scope>NUCLEOTIDE SEQUENCE [LARGE SCALE GENOMIC DNA]</scope>
    <source>
        <strain>ATCC 35984 / DSM 28319 / BCRC 17069 / CCUG 31568 / BM 3577 / RP62A</strain>
    </source>
</reference>
<gene>
    <name evidence="1" type="primary">murB</name>
    <name type="ordered locus">SERP0405</name>
</gene>
<feature type="chain" id="PRO_0000179264" description="UDP-N-acetylenolpyruvoylglucosamine reductase">
    <location>
        <begin position="1"/>
        <end position="306"/>
    </location>
</feature>
<feature type="domain" description="FAD-binding PCMH-type" evidence="1">
    <location>
        <begin position="33"/>
        <end position="197"/>
    </location>
</feature>
<feature type="active site" evidence="1">
    <location>
        <position position="176"/>
    </location>
</feature>
<feature type="active site" description="Proton donor" evidence="1">
    <location>
        <position position="226"/>
    </location>
</feature>
<feature type="active site" evidence="1">
    <location>
        <position position="296"/>
    </location>
</feature>
<evidence type="ECO:0000255" key="1">
    <source>
        <dbReference type="HAMAP-Rule" id="MF_00037"/>
    </source>
</evidence>
<protein>
    <recommendedName>
        <fullName evidence="1">UDP-N-acetylenolpyruvoylglucosamine reductase</fullName>
        <ecNumber evidence="1">1.3.1.98</ecNumber>
    </recommendedName>
    <alternativeName>
        <fullName evidence="1">UDP-N-acetylmuramate dehydrogenase</fullName>
    </alternativeName>
</protein>
<accession>Q5HQZ1</accession>
<name>MURB_STAEQ</name>
<keyword id="KW-0131">Cell cycle</keyword>
<keyword id="KW-0132">Cell division</keyword>
<keyword id="KW-0133">Cell shape</keyword>
<keyword id="KW-0961">Cell wall biogenesis/degradation</keyword>
<keyword id="KW-0963">Cytoplasm</keyword>
<keyword id="KW-0274">FAD</keyword>
<keyword id="KW-0285">Flavoprotein</keyword>
<keyword id="KW-0521">NADP</keyword>
<keyword id="KW-0560">Oxidoreductase</keyword>
<keyword id="KW-0573">Peptidoglycan synthesis</keyword>
<keyword id="KW-1185">Reference proteome</keyword>